<accession>P67963</accession>
<accession>O57528</accession>
<accession>P70065</accession>
<accession>P79789</accession>
<accession>P79790</accession>
<accession>Q5D074</accession>
<proteinExistence type="evidence at protein level"/>
<keyword id="KW-0067">ATP-binding</keyword>
<keyword id="KW-0131">Cell cycle</keyword>
<keyword id="KW-0132">Cell division</keyword>
<keyword id="KW-0966">Cell projection</keyword>
<keyword id="KW-0137">Centromere</keyword>
<keyword id="KW-0158">Chromosome</keyword>
<keyword id="KW-0963">Cytoplasm</keyword>
<keyword id="KW-0206">Cytoskeleton</keyword>
<keyword id="KW-0418">Kinase</keyword>
<keyword id="KW-0995">Kinetochore</keyword>
<keyword id="KW-0498">Mitosis</keyword>
<keyword id="KW-0547">Nucleotide-binding</keyword>
<keyword id="KW-0539">Nucleus</keyword>
<keyword id="KW-0597">Phosphoprotein</keyword>
<keyword id="KW-1185">Reference proteome</keyword>
<keyword id="KW-0723">Serine/threonine-protein kinase</keyword>
<keyword id="KW-0808">Transferase</keyword>
<keyword id="KW-0879">Wnt signaling pathway</keyword>
<comment type="function">
    <text evidence="1 6 7">Casein kinases are operationally defined by their preferential utilization of acidic proteins such as caseins as substrates. It can phosphorylate a large number of proteins. Participates in Wnt signaling. May play a role in segregating chromosomes during mitosis. May play a role in keratin cytoskeleton disassembly (By similarity) (PubMed:9022677). Phosphorylates protein custos (PubMed:25157132).</text>
</comment>
<comment type="catalytic activity">
    <reaction>
        <text>L-seryl-[protein] + ATP = O-phospho-L-seryl-[protein] + ADP + H(+)</text>
        <dbReference type="Rhea" id="RHEA:17989"/>
        <dbReference type="Rhea" id="RHEA-COMP:9863"/>
        <dbReference type="Rhea" id="RHEA-COMP:11604"/>
        <dbReference type="ChEBI" id="CHEBI:15378"/>
        <dbReference type="ChEBI" id="CHEBI:29999"/>
        <dbReference type="ChEBI" id="CHEBI:30616"/>
        <dbReference type="ChEBI" id="CHEBI:83421"/>
        <dbReference type="ChEBI" id="CHEBI:456216"/>
        <dbReference type="EC" id="2.7.11.1"/>
    </reaction>
</comment>
<comment type="catalytic activity">
    <reaction>
        <text>L-threonyl-[protein] + ATP = O-phospho-L-threonyl-[protein] + ADP + H(+)</text>
        <dbReference type="Rhea" id="RHEA:46608"/>
        <dbReference type="Rhea" id="RHEA-COMP:11060"/>
        <dbReference type="Rhea" id="RHEA-COMP:11605"/>
        <dbReference type="ChEBI" id="CHEBI:15378"/>
        <dbReference type="ChEBI" id="CHEBI:30013"/>
        <dbReference type="ChEBI" id="CHEBI:30616"/>
        <dbReference type="ChEBI" id="CHEBI:61977"/>
        <dbReference type="ChEBI" id="CHEBI:456216"/>
        <dbReference type="EC" id="2.7.11.1"/>
    </reaction>
</comment>
<comment type="subunit">
    <text evidence="6">Interacts with custos.</text>
</comment>
<comment type="subcellular location">
    <subcellularLocation>
        <location evidence="1">Cytoplasm</location>
    </subcellularLocation>
    <subcellularLocation>
        <location evidence="1">Cytoplasm</location>
        <location evidence="1">Cytoskeleton</location>
        <location evidence="1">Microtubule organizing center</location>
        <location evidence="1">Centrosome</location>
    </subcellularLocation>
    <subcellularLocation>
        <location evidence="1">Chromosome</location>
        <location evidence="1">Centromere</location>
        <location evidence="1">Kinetochore</location>
    </subcellularLocation>
    <subcellularLocation>
        <location evidence="1">Nucleus speckle</location>
    </subcellularLocation>
    <subcellularLocation>
        <location evidence="2">Cytoplasm</location>
        <location evidence="2">Cytoskeleton</location>
        <location evidence="2">Cilium basal body</location>
    </subcellularLocation>
    <subcellularLocation>
        <location evidence="2">Cytoplasm</location>
        <location evidence="2">Cytoskeleton</location>
        <location evidence="2">Spindle</location>
    </subcellularLocation>
</comment>
<comment type="PTM">
    <text>Autophosphorylated.</text>
</comment>
<comment type="similarity">
    <text evidence="8">Belongs to the protein kinase superfamily. CK1 Ser/Thr protein kinase family. Casein kinase I subfamily.</text>
</comment>
<sequence length="337" mass="38901">MASSSGSKAEFIVGGKYKLVRKIGSGSFGDIYLAINITNGEEVAVKLESQKARHPQLLYESKLYKILQGGVGIPHIRWYGQEKDYNVLVMDLLGPSLEDLFNFCSRRFTMKTVLMLADQMISRIEYVHTKNFIHRDIKPDNFLMGIGRHCNKLFLIDFGLAKKYRDNRTRQHIPYREDKNLTGTARYASINAHLGIEQSRRDDMESLGYVLMYFNRTSLPWQGLKAATKKQKYEKISEKKMSTPVEVLCKGFPAEFAMYLNYCRGLRFEEAPDYMYLRQLFRILFRTLNHQYDYTFDWTMLKQKAAQQAASSSGQGQQAQTPTGKQTDKSKSNMKGF</sequence>
<name>KC1A_XENLA</name>
<organism>
    <name type="scientific">Xenopus laevis</name>
    <name type="common">African clawed frog</name>
    <dbReference type="NCBI Taxonomy" id="8355"/>
    <lineage>
        <taxon>Eukaryota</taxon>
        <taxon>Metazoa</taxon>
        <taxon>Chordata</taxon>
        <taxon>Craniata</taxon>
        <taxon>Vertebrata</taxon>
        <taxon>Euteleostomi</taxon>
        <taxon>Amphibia</taxon>
        <taxon>Batrachia</taxon>
        <taxon>Anura</taxon>
        <taxon>Pipoidea</taxon>
        <taxon>Pipidae</taxon>
        <taxon>Xenopodinae</taxon>
        <taxon>Xenopus</taxon>
        <taxon>Xenopus</taxon>
    </lineage>
</organism>
<protein>
    <recommendedName>
        <fullName>Casein kinase I isoform alpha</fullName>
        <shortName>CKI-alpha</shortName>
        <ecNumber>2.7.11.1</ecNumber>
    </recommendedName>
    <alternativeName>
        <fullName>CK1</fullName>
    </alternativeName>
</protein>
<evidence type="ECO:0000250" key="1">
    <source>
        <dbReference type="UniProtKB" id="P48729"/>
    </source>
</evidence>
<evidence type="ECO:0000250" key="2">
    <source>
        <dbReference type="UniProtKB" id="Q8BK63"/>
    </source>
</evidence>
<evidence type="ECO:0000255" key="3">
    <source>
        <dbReference type="PROSITE-ProRule" id="PRU00159"/>
    </source>
</evidence>
<evidence type="ECO:0000255" key="4">
    <source>
        <dbReference type="PROSITE-ProRule" id="PRU10027"/>
    </source>
</evidence>
<evidence type="ECO:0000256" key="5">
    <source>
        <dbReference type="SAM" id="MobiDB-lite"/>
    </source>
</evidence>
<evidence type="ECO:0000269" key="6">
    <source>
    </source>
</evidence>
<evidence type="ECO:0000269" key="7">
    <source>
    </source>
</evidence>
<evidence type="ECO:0000305" key="8"/>
<gene>
    <name type="primary">csnk1a1</name>
</gene>
<reference key="1">
    <citation type="journal article" date="1996" name="Eur. J. Biochem.">
        <title>The recombinant alpha isoform of protein kinase CK1 from Xenopus laevis can phosphorylate tyrosine in synthetic substrates.</title>
        <authorList>
            <person name="Pulgar V."/>
            <person name="Tapia C."/>
            <person name="Vignolo P."/>
            <person name="Santos J."/>
            <person name="Sunkel C.E."/>
            <person name="Allende C.C."/>
            <person name="Allende J.E."/>
        </authorList>
    </citation>
    <scope>NUCLEOTIDE SEQUENCE [MRNA]</scope>
    <scope>FUNCTION</scope>
</reference>
<reference key="2">
    <citation type="submission" date="2003-09" db="EMBL/GenBank/DDBJ databases">
        <authorList>
            <consortium name="NIH - Xenopus Gene Collection (XGC) project"/>
        </authorList>
    </citation>
    <scope>NUCLEOTIDE SEQUENCE [LARGE SCALE MRNA]</scope>
    <source>
        <tissue>Embryo</tissue>
    </source>
</reference>
<reference key="3">
    <citation type="journal article" date="2014" name="Proc. Natl. Acad. Sci. U.S.A.">
        <title>Custos controls beta-catenin to regulate head development during vertebrate embryogenesis.</title>
        <authorList>
            <person name="Komiya Y."/>
            <person name="Mandrekar N."/>
            <person name="Sato A."/>
            <person name="Dawid I.B."/>
            <person name="Habas R."/>
        </authorList>
    </citation>
    <scope>FUNCTION</scope>
    <scope>INTERACTION WITH CUSTOS</scope>
</reference>
<dbReference type="EC" id="2.7.11.1"/>
<dbReference type="EMBL" id="Y08817">
    <property type="protein sequence ID" value="CAA70051.1"/>
    <property type="molecule type" value="mRNA"/>
</dbReference>
<dbReference type="EMBL" id="BC057701">
    <property type="protein sequence ID" value="AAH57701.1"/>
    <property type="molecule type" value="mRNA"/>
</dbReference>
<dbReference type="RefSeq" id="NP_001079933.1">
    <property type="nucleotide sequence ID" value="NM_001086464.1"/>
</dbReference>
<dbReference type="SMR" id="P67963"/>
<dbReference type="IntAct" id="P67963">
    <property type="interactions" value="1"/>
</dbReference>
<dbReference type="DNASU" id="379624"/>
<dbReference type="GeneID" id="379624"/>
<dbReference type="KEGG" id="xla:379624"/>
<dbReference type="AGR" id="Xenbase:XB-GENE-478125"/>
<dbReference type="CTD" id="379624"/>
<dbReference type="Xenbase" id="XB-GENE-478125">
    <property type="gene designation" value="csnk1a1.L"/>
</dbReference>
<dbReference type="OMA" id="ESRVYKY"/>
<dbReference type="OrthoDB" id="5800476at2759"/>
<dbReference type="Proteomes" id="UP000186698">
    <property type="component" value="Chromosome 3L"/>
</dbReference>
<dbReference type="Bgee" id="379624">
    <property type="expression patterns" value="Expressed in gastrula and 19 other cell types or tissues"/>
</dbReference>
<dbReference type="GO" id="GO:0005813">
    <property type="term" value="C:centrosome"/>
    <property type="evidence" value="ECO:0007669"/>
    <property type="project" value="UniProtKB-SubCell"/>
</dbReference>
<dbReference type="GO" id="GO:0036064">
    <property type="term" value="C:ciliary basal body"/>
    <property type="evidence" value="ECO:0000250"/>
    <property type="project" value="UniProtKB"/>
</dbReference>
<dbReference type="GO" id="GO:0005737">
    <property type="term" value="C:cytoplasm"/>
    <property type="evidence" value="ECO:0000318"/>
    <property type="project" value="GO_Central"/>
</dbReference>
<dbReference type="GO" id="GO:0000776">
    <property type="term" value="C:kinetochore"/>
    <property type="evidence" value="ECO:0007669"/>
    <property type="project" value="UniProtKB-KW"/>
</dbReference>
<dbReference type="GO" id="GO:0016607">
    <property type="term" value="C:nuclear speck"/>
    <property type="evidence" value="ECO:0000250"/>
    <property type="project" value="UniProtKB"/>
</dbReference>
<dbReference type="GO" id="GO:0005634">
    <property type="term" value="C:nucleus"/>
    <property type="evidence" value="ECO:0000318"/>
    <property type="project" value="GO_Central"/>
</dbReference>
<dbReference type="GO" id="GO:0005819">
    <property type="term" value="C:spindle"/>
    <property type="evidence" value="ECO:0007669"/>
    <property type="project" value="UniProtKB-SubCell"/>
</dbReference>
<dbReference type="GO" id="GO:0005524">
    <property type="term" value="F:ATP binding"/>
    <property type="evidence" value="ECO:0007669"/>
    <property type="project" value="UniProtKB-KW"/>
</dbReference>
<dbReference type="GO" id="GO:0106310">
    <property type="term" value="F:protein serine kinase activity"/>
    <property type="evidence" value="ECO:0007669"/>
    <property type="project" value="RHEA"/>
</dbReference>
<dbReference type="GO" id="GO:0004674">
    <property type="term" value="F:protein serine/threonine kinase activity"/>
    <property type="evidence" value="ECO:0000250"/>
    <property type="project" value="UniProtKB"/>
</dbReference>
<dbReference type="GO" id="GO:0051301">
    <property type="term" value="P:cell division"/>
    <property type="evidence" value="ECO:0007669"/>
    <property type="project" value="UniProtKB-KW"/>
</dbReference>
<dbReference type="GO" id="GO:0045104">
    <property type="term" value="P:intermediate filament cytoskeleton organization"/>
    <property type="evidence" value="ECO:0000250"/>
    <property type="project" value="UniProtKB"/>
</dbReference>
<dbReference type="GO" id="GO:0090090">
    <property type="term" value="P:negative regulation of canonical Wnt signaling pathway"/>
    <property type="evidence" value="ECO:0000318"/>
    <property type="project" value="GO_Central"/>
</dbReference>
<dbReference type="GO" id="GO:1900226">
    <property type="term" value="P:negative regulation of NLRP3 inflammasome complex assembly"/>
    <property type="evidence" value="ECO:0000250"/>
    <property type="project" value="UniProtKB"/>
</dbReference>
<dbReference type="GO" id="GO:0006468">
    <property type="term" value="P:protein phosphorylation"/>
    <property type="evidence" value="ECO:0000250"/>
    <property type="project" value="UniProtKB"/>
</dbReference>
<dbReference type="GO" id="GO:0007165">
    <property type="term" value="P:signal transduction"/>
    <property type="evidence" value="ECO:0000318"/>
    <property type="project" value="GO_Central"/>
</dbReference>
<dbReference type="GO" id="GO:0016055">
    <property type="term" value="P:Wnt signaling pathway"/>
    <property type="evidence" value="ECO:0007669"/>
    <property type="project" value="UniProtKB-KW"/>
</dbReference>
<dbReference type="CDD" id="cd14128">
    <property type="entry name" value="STKc_CK1_alpha"/>
    <property type="match status" value="1"/>
</dbReference>
<dbReference type="FunFam" id="1.10.510.10:FF:000120">
    <property type="entry name" value="Casein kinase I isoform alpha"/>
    <property type="match status" value="1"/>
</dbReference>
<dbReference type="FunFam" id="3.30.200.20:FF:000538">
    <property type="entry name" value="Putative Casein kinase I"/>
    <property type="match status" value="1"/>
</dbReference>
<dbReference type="Gene3D" id="1.10.510.10">
    <property type="entry name" value="Transferase(Phosphotransferase) domain 1"/>
    <property type="match status" value="1"/>
</dbReference>
<dbReference type="InterPro" id="IPR050235">
    <property type="entry name" value="CK1_Ser-Thr_kinase"/>
</dbReference>
<dbReference type="InterPro" id="IPR011009">
    <property type="entry name" value="Kinase-like_dom_sf"/>
</dbReference>
<dbReference type="InterPro" id="IPR000719">
    <property type="entry name" value="Prot_kinase_dom"/>
</dbReference>
<dbReference type="InterPro" id="IPR017441">
    <property type="entry name" value="Protein_kinase_ATP_BS"/>
</dbReference>
<dbReference type="InterPro" id="IPR008271">
    <property type="entry name" value="Ser/Thr_kinase_AS"/>
</dbReference>
<dbReference type="PANTHER" id="PTHR11909">
    <property type="entry name" value="CASEIN KINASE-RELATED"/>
    <property type="match status" value="1"/>
</dbReference>
<dbReference type="Pfam" id="PF00069">
    <property type="entry name" value="Pkinase"/>
    <property type="match status" value="1"/>
</dbReference>
<dbReference type="SMART" id="SM00220">
    <property type="entry name" value="S_TKc"/>
    <property type="match status" value="1"/>
</dbReference>
<dbReference type="SUPFAM" id="SSF56112">
    <property type="entry name" value="Protein kinase-like (PK-like)"/>
    <property type="match status" value="1"/>
</dbReference>
<dbReference type="PROSITE" id="PS00107">
    <property type="entry name" value="PROTEIN_KINASE_ATP"/>
    <property type="match status" value="1"/>
</dbReference>
<dbReference type="PROSITE" id="PS50011">
    <property type="entry name" value="PROTEIN_KINASE_DOM"/>
    <property type="match status" value="1"/>
</dbReference>
<dbReference type="PROSITE" id="PS00108">
    <property type="entry name" value="PROTEIN_KINASE_ST"/>
    <property type="match status" value="1"/>
</dbReference>
<feature type="chain" id="PRO_0000192829" description="Casein kinase I isoform alpha">
    <location>
        <begin position="1"/>
        <end position="337"/>
    </location>
</feature>
<feature type="domain" description="Protein kinase" evidence="3">
    <location>
        <begin position="17"/>
        <end position="285"/>
    </location>
</feature>
<feature type="region of interest" description="Disordered" evidence="5">
    <location>
        <begin position="309"/>
        <end position="337"/>
    </location>
</feature>
<feature type="compositionally biased region" description="Low complexity" evidence="5">
    <location>
        <begin position="309"/>
        <end position="325"/>
    </location>
</feature>
<feature type="active site" description="Proton acceptor" evidence="3 4">
    <location>
        <position position="136"/>
    </location>
</feature>
<feature type="binding site" evidence="3">
    <location>
        <begin position="23"/>
        <end position="31"/>
    </location>
    <ligand>
        <name>ATP</name>
        <dbReference type="ChEBI" id="CHEBI:30616"/>
    </ligand>
</feature>
<feature type="binding site" evidence="3">
    <location>
        <position position="46"/>
    </location>
    <ligand>
        <name>ATP</name>
        <dbReference type="ChEBI" id="CHEBI:30616"/>
    </ligand>
</feature>